<dbReference type="EC" id="3.6.1.27" evidence="1"/>
<dbReference type="EMBL" id="CP000975">
    <property type="protein sequence ID" value="ACD82867.1"/>
    <property type="molecule type" value="Genomic_DNA"/>
</dbReference>
<dbReference type="RefSeq" id="WP_012463149.1">
    <property type="nucleotide sequence ID" value="NC_010794.1"/>
</dbReference>
<dbReference type="SMR" id="B3E171"/>
<dbReference type="STRING" id="481448.Minf_0812"/>
<dbReference type="KEGG" id="min:Minf_0812"/>
<dbReference type="eggNOG" id="COG1968">
    <property type="taxonomic scope" value="Bacteria"/>
</dbReference>
<dbReference type="HOGENOM" id="CLU_060296_2_0_0"/>
<dbReference type="OrthoDB" id="9808289at2"/>
<dbReference type="Proteomes" id="UP000009149">
    <property type="component" value="Chromosome"/>
</dbReference>
<dbReference type="GO" id="GO:0005886">
    <property type="term" value="C:plasma membrane"/>
    <property type="evidence" value="ECO:0007669"/>
    <property type="project" value="UniProtKB-SubCell"/>
</dbReference>
<dbReference type="GO" id="GO:0050380">
    <property type="term" value="F:undecaprenyl-diphosphatase activity"/>
    <property type="evidence" value="ECO:0007669"/>
    <property type="project" value="UniProtKB-UniRule"/>
</dbReference>
<dbReference type="GO" id="GO:0071555">
    <property type="term" value="P:cell wall organization"/>
    <property type="evidence" value="ECO:0007669"/>
    <property type="project" value="UniProtKB-KW"/>
</dbReference>
<dbReference type="GO" id="GO:0009252">
    <property type="term" value="P:peptidoglycan biosynthetic process"/>
    <property type="evidence" value="ECO:0007669"/>
    <property type="project" value="UniProtKB-KW"/>
</dbReference>
<dbReference type="GO" id="GO:0008360">
    <property type="term" value="P:regulation of cell shape"/>
    <property type="evidence" value="ECO:0007669"/>
    <property type="project" value="UniProtKB-KW"/>
</dbReference>
<dbReference type="GO" id="GO:0046677">
    <property type="term" value="P:response to antibiotic"/>
    <property type="evidence" value="ECO:0007669"/>
    <property type="project" value="UniProtKB-UniRule"/>
</dbReference>
<dbReference type="HAMAP" id="MF_01006">
    <property type="entry name" value="Undec_diphosphatase"/>
    <property type="match status" value="1"/>
</dbReference>
<dbReference type="InterPro" id="IPR003824">
    <property type="entry name" value="UppP"/>
</dbReference>
<dbReference type="NCBIfam" id="NF001390">
    <property type="entry name" value="PRK00281.1-4"/>
    <property type="match status" value="1"/>
</dbReference>
<dbReference type="PANTHER" id="PTHR30622">
    <property type="entry name" value="UNDECAPRENYL-DIPHOSPHATASE"/>
    <property type="match status" value="1"/>
</dbReference>
<dbReference type="PANTHER" id="PTHR30622:SF3">
    <property type="entry name" value="UNDECAPRENYL-DIPHOSPHATASE"/>
    <property type="match status" value="1"/>
</dbReference>
<dbReference type="Pfam" id="PF02673">
    <property type="entry name" value="BacA"/>
    <property type="match status" value="1"/>
</dbReference>
<proteinExistence type="inferred from homology"/>
<protein>
    <recommendedName>
        <fullName evidence="1">Undecaprenyl-diphosphatase</fullName>
        <ecNumber evidence="1">3.6.1.27</ecNumber>
    </recommendedName>
    <alternativeName>
        <fullName evidence="1">Bacitracin resistance protein</fullName>
    </alternativeName>
    <alternativeName>
        <fullName evidence="1">Undecaprenyl pyrophosphate phosphatase</fullName>
    </alternativeName>
</protein>
<sequence>MHDLWPTILLGIIEGLSEFLPISSTGHLLVAEHWLGERSETFNIFIQLGAVLAVCLIYKERLSSFLFLWKDREKLPYFLKLSVAFIITSILGLWVKKMGWELPKDLGPVIIAIFGGAFWIYFTEKVSSQRQSFVEEISWPTAIAVGASQVVAGVLPGFSRSAATILMAVLLGVSRPAATEFAFLLGIPTMFAASLFAWIEETHFLKNPSLDSPLTLATGFCVSAVVAFISVKWLLSYIQTHTFIPFVWYRVGLGFFLIALVALGWKTQ</sequence>
<organism>
    <name type="scientific">Methylacidiphilum infernorum (isolate V4)</name>
    <name type="common">Methylokorus infernorum (strain V4)</name>
    <dbReference type="NCBI Taxonomy" id="481448"/>
    <lineage>
        <taxon>Bacteria</taxon>
        <taxon>Pseudomonadati</taxon>
        <taxon>Verrucomicrobiota</taxon>
        <taxon>Methylacidiphilae</taxon>
        <taxon>Methylacidiphilales</taxon>
        <taxon>Methylacidiphilaceae</taxon>
        <taxon>Methylacidiphilum (ex Ratnadevi et al. 2023)</taxon>
    </lineage>
</organism>
<evidence type="ECO:0000255" key="1">
    <source>
        <dbReference type="HAMAP-Rule" id="MF_01006"/>
    </source>
</evidence>
<name>UPPP_METI4</name>
<comment type="function">
    <text evidence="1">Catalyzes the dephosphorylation of undecaprenyl diphosphate (UPP). Confers resistance to bacitracin.</text>
</comment>
<comment type="catalytic activity">
    <reaction evidence="1">
        <text>di-trans,octa-cis-undecaprenyl diphosphate + H2O = di-trans,octa-cis-undecaprenyl phosphate + phosphate + H(+)</text>
        <dbReference type="Rhea" id="RHEA:28094"/>
        <dbReference type="ChEBI" id="CHEBI:15377"/>
        <dbReference type="ChEBI" id="CHEBI:15378"/>
        <dbReference type="ChEBI" id="CHEBI:43474"/>
        <dbReference type="ChEBI" id="CHEBI:58405"/>
        <dbReference type="ChEBI" id="CHEBI:60392"/>
        <dbReference type="EC" id="3.6.1.27"/>
    </reaction>
</comment>
<comment type="subcellular location">
    <subcellularLocation>
        <location evidence="1">Cell inner membrane</location>
        <topology evidence="1">Multi-pass membrane protein</topology>
    </subcellularLocation>
</comment>
<comment type="miscellaneous">
    <text>Bacitracin is thought to be involved in the inhibition of peptidoglycan synthesis by sequestering undecaprenyl diphosphate, thereby reducing the pool of lipid carrier available.</text>
</comment>
<comment type="similarity">
    <text evidence="1">Belongs to the UppP family.</text>
</comment>
<accession>B3E171</accession>
<keyword id="KW-0046">Antibiotic resistance</keyword>
<keyword id="KW-0997">Cell inner membrane</keyword>
<keyword id="KW-1003">Cell membrane</keyword>
<keyword id="KW-0133">Cell shape</keyword>
<keyword id="KW-0961">Cell wall biogenesis/degradation</keyword>
<keyword id="KW-0378">Hydrolase</keyword>
<keyword id="KW-0472">Membrane</keyword>
<keyword id="KW-0573">Peptidoglycan synthesis</keyword>
<keyword id="KW-0812">Transmembrane</keyword>
<keyword id="KW-1133">Transmembrane helix</keyword>
<gene>
    <name evidence="1" type="primary">uppP</name>
    <name type="ordered locus">Minf_0812</name>
</gene>
<reference key="1">
    <citation type="journal article" date="2008" name="Biol. Direct">
        <title>Complete genome sequence of the extremely acidophilic methanotroph isolate V4, Methylacidiphilum infernorum, a representative of the bacterial phylum Verrucomicrobia.</title>
        <authorList>
            <person name="Hou S."/>
            <person name="Makarova K.S."/>
            <person name="Saw J.H."/>
            <person name="Senin P."/>
            <person name="Ly B.V."/>
            <person name="Zhou Z."/>
            <person name="Ren Y."/>
            <person name="Wang J."/>
            <person name="Galperin M.Y."/>
            <person name="Omelchenko M.V."/>
            <person name="Wolf Y.I."/>
            <person name="Yutin N."/>
            <person name="Koonin E.V."/>
            <person name="Stott M.B."/>
            <person name="Mountain B.W."/>
            <person name="Crowe M.A."/>
            <person name="Smirnova A.V."/>
            <person name="Dunfield P.F."/>
            <person name="Feng L."/>
            <person name="Wang L."/>
            <person name="Alam M."/>
        </authorList>
    </citation>
    <scope>NUCLEOTIDE SEQUENCE [LARGE SCALE GENOMIC DNA]</scope>
    <source>
        <strain>Isolate V4</strain>
    </source>
</reference>
<feature type="chain" id="PRO_1000197382" description="Undecaprenyl-diphosphatase">
    <location>
        <begin position="1"/>
        <end position="268"/>
    </location>
</feature>
<feature type="transmembrane region" description="Helical" evidence="1">
    <location>
        <begin position="39"/>
        <end position="59"/>
    </location>
</feature>
<feature type="transmembrane region" description="Helical" evidence="1">
    <location>
        <begin position="75"/>
        <end position="95"/>
    </location>
</feature>
<feature type="transmembrane region" description="Helical" evidence="1">
    <location>
        <begin position="106"/>
        <end position="126"/>
    </location>
</feature>
<feature type="transmembrane region" description="Helical" evidence="1">
    <location>
        <begin position="179"/>
        <end position="199"/>
    </location>
</feature>
<feature type="transmembrane region" description="Helical" evidence="1">
    <location>
        <begin position="214"/>
        <end position="234"/>
    </location>
</feature>
<feature type="transmembrane region" description="Helical" evidence="1">
    <location>
        <begin position="243"/>
        <end position="263"/>
    </location>
</feature>